<keyword id="KW-0066">ATP synthesis</keyword>
<keyword id="KW-0138">CF(0)</keyword>
<keyword id="KW-0375">Hydrogen ion transport</keyword>
<keyword id="KW-0406">Ion transport</keyword>
<keyword id="KW-0446">Lipid-binding</keyword>
<keyword id="KW-0472">Membrane</keyword>
<keyword id="KW-0793">Thylakoid</keyword>
<keyword id="KW-0812">Transmembrane</keyword>
<keyword id="KW-1133">Transmembrane helix</keyword>
<keyword id="KW-0813">Transport</keyword>
<comment type="function">
    <text evidence="1">F(1)F(0) ATP synthase produces ATP from ADP in the presence of a proton or sodium gradient. F-type ATPases consist of two structural domains, F(1) containing the extramembraneous catalytic core and F(0) containing the membrane proton channel, linked together by a central stalk and a peripheral stalk. During catalysis, ATP synthesis in the catalytic domain of F(1) is coupled via a rotary mechanism of the central stalk subunits to proton translocation.</text>
</comment>
<comment type="function">
    <text evidence="1">Key component of the F(0) channel; it plays a direct role in translocation across the membrane. A homomeric c-ring of between 10-14 subunits forms the central stalk rotor element with the F(1) delta and epsilon subunits.</text>
</comment>
<comment type="subunit">
    <text evidence="1">F-type ATPases have 2 components, F(1) - the catalytic core - and F(0) - the membrane proton channel. F(1) has five subunits: alpha(3), beta(3), gamma(1), delta(1), epsilon(1). F(0) has four main subunits: a(1), b(1), b'(1) and c(10-14). The alpha and beta chains form an alternating ring which encloses part of the gamma chain. F(1) is attached to F(0) by a central stalk formed by the gamma and epsilon chains, while a peripheral stalk is formed by the delta, b and b' chains.</text>
</comment>
<comment type="subcellular location">
    <subcellularLocation>
        <location evidence="1">Cellular thylakoid membrane</location>
        <topology evidence="1">Multi-pass membrane protein</topology>
    </subcellularLocation>
</comment>
<comment type="similarity">
    <text evidence="1">Belongs to the ATPase C chain family.</text>
</comment>
<comment type="sequence caution" evidence="2">
    <conflict type="erroneous initiation">
        <sequence resource="EMBL-CDS" id="ABM77231"/>
    </conflict>
</comment>
<sequence length="82" mass="7989">MDSITTAASVVAAGLAVGLGAIGPGIGQGTAAGGAVEGIARQPEAEGKIRGTLLLSFAFMESLTIYGLVVALVLLFANPFAG</sequence>
<gene>
    <name evidence="1" type="primary">atpE</name>
    <name evidence="1" type="synonym">atpH</name>
    <name type="ordered locus">P9303_04791</name>
</gene>
<dbReference type="EMBL" id="CP000554">
    <property type="protein sequence ID" value="ABM77231.1"/>
    <property type="status" value="ALT_INIT"/>
    <property type="molecule type" value="Genomic_DNA"/>
</dbReference>
<dbReference type="RefSeq" id="WP_011130839.1">
    <property type="nucleotide sequence ID" value="NC_008820.1"/>
</dbReference>
<dbReference type="SMR" id="A2C6X1"/>
<dbReference type="STRING" id="59922.P9303_04791"/>
<dbReference type="KEGG" id="pmf:P9303_04791"/>
<dbReference type="HOGENOM" id="CLU_148047_0_0_3"/>
<dbReference type="Proteomes" id="UP000002274">
    <property type="component" value="Chromosome"/>
</dbReference>
<dbReference type="GO" id="GO:0031676">
    <property type="term" value="C:plasma membrane-derived thylakoid membrane"/>
    <property type="evidence" value="ECO:0007669"/>
    <property type="project" value="UniProtKB-SubCell"/>
</dbReference>
<dbReference type="GO" id="GO:0045259">
    <property type="term" value="C:proton-transporting ATP synthase complex"/>
    <property type="evidence" value="ECO:0007669"/>
    <property type="project" value="UniProtKB-KW"/>
</dbReference>
<dbReference type="GO" id="GO:0033177">
    <property type="term" value="C:proton-transporting two-sector ATPase complex, proton-transporting domain"/>
    <property type="evidence" value="ECO:0007669"/>
    <property type="project" value="InterPro"/>
</dbReference>
<dbReference type="GO" id="GO:0008289">
    <property type="term" value="F:lipid binding"/>
    <property type="evidence" value="ECO:0007669"/>
    <property type="project" value="UniProtKB-KW"/>
</dbReference>
<dbReference type="GO" id="GO:0046933">
    <property type="term" value="F:proton-transporting ATP synthase activity, rotational mechanism"/>
    <property type="evidence" value="ECO:0007669"/>
    <property type="project" value="UniProtKB-UniRule"/>
</dbReference>
<dbReference type="CDD" id="cd18183">
    <property type="entry name" value="ATP-synt_Fo_c_ATPH"/>
    <property type="match status" value="1"/>
</dbReference>
<dbReference type="FunFam" id="1.20.20.10:FF:000001">
    <property type="entry name" value="ATP synthase subunit c, chloroplastic"/>
    <property type="match status" value="1"/>
</dbReference>
<dbReference type="Gene3D" id="1.20.20.10">
    <property type="entry name" value="F1F0 ATP synthase subunit C"/>
    <property type="match status" value="1"/>
</dbReference>
<dbReference type="HAMAP" id="MF_01396">
    <property type="entry name" value="ATP_synth_c_bact"/>
    <property type="match status" value="1"/>
</dbReference>
<dbReference type="InterPro" id="IPR005953">
    <property type="entry name" value="ATP_synth_csu_bac/chlpt"/>
</dbReference>
<dbReference type="InterPro" id="IPR000454">
    <property type="entry name" value="ATP_synth_F0_csu"/>
</dbReference>
<dbReference type="InterPro" id="IPR020537">
    <property type="entry name" value="ATP_synth_F0_csu_DDCD_BS"/>
</dbReference>
<dbReference type="InterPro" id="IPR038662">
    <property type="entry name" value="ATP_synth_F0_csu_sf"/>
</dbReference>
<dbReference type="InterPro" id="IPR002379">
    <property type="entry name" value="ATPase_proteolipid_c-like_dom"/>
</dbReference>
<dbReference type="InterPro" id="IPR035921">
    <property type="entry name" value="F/V-ATP_Csub_sf"/>
</dbReference>
<dbReference type="NCBIfam" id="TIGR01260">
    <property type="entry name" value="ATP_synt_c"/>
    <property type="match status" value="1"/>
</dbReference>
<dbReference type="NCBIfam" id="NF005608">
    <property type="entry name" value="PRK07354.1"/>
    <property type="match status" value="1"/>
</dbReference>
<dbReference type="PANTHER" id="PTHR10031">
    <property type="entry name" value="ATP SYNTHASE LIPID-BINDING PROTEIN, MITOCHONDRIAL"/>
    <property type="match status" value="1"/>
</dbReference>
<dbReference type="PANTHER" id="PTHR10031:SF0">
    <property type="entry name" value="ATPASE PROTEIN 9"/>
    <property type="match status" value="1"/>
</dbReference>
<dbReference type="Pfam" id="PF00137">
    <property type="entry name" value="ATP-synt_C"/>
    <property type="match status" value="1"/>
</dbReference>
<dbReference type="PRINTS" id="PR00124">
    <property type="entry name" value="ATPASEC"/>
</dbReference>
<dbReference type="SUPFAM" id="SSF81333">
    <property type="entry name" value="F1F0 ATP synthase subunit C"/>
    <property type="match status" value="1"/>
</dbReference>
<dbReference type="PROSITE" id="PS00605">
    <property type="entry name" value="ATPASE_C"/>
    <property type="match status" value="1"/>
</dbReference>
<accession>A2C6X1</accession>
<name>ATPL_PROM3</name>
<reference key="1">
    <citation type="journal article" date="2007" name="PLoS Genet.">
        <title>Patterns and implications of gene gain and loss in the evolution of Prochlorococcus.</title>
        <authorList>
            <person name="Kettler G.C."/>
            <person name="Martiny A.C."/>
            <person name="Huang K."/>
            <person name="Zucker J."/>
            <person name="Coleman M.L."/>
            <person name="Rodrigue S."/>
            <person name="Chen F."/>
            <person name="Lapidus A."/>
            <person name="Ferriera S."/>
            <person name="Johnson J."/>
            <person name="Steglich C."/>
            <person name="Church G.M."/>
            <person name="Richardson P."/>
            <person name="Chisholm S.W."/>
        </authorList>
    </citation>
    <scope>NUCLEOTIDE SEQUENCE [LARGE SCALE GENOMIC DNA]</scope>
    <source>
        <strain>MIT 9303</strain>
    </source>
</reference>
<evidence type="ECO:0000255" key="1">
    <source>
        <dbReference type="HAMAP-Rule" id="MF_01396"/>
    </source>
</evidence>
<evidence type="ECO:0000305" key="2"/>
<proteinExistence type="inferred from homology"/>
<feature type="chain" id="PRO_0000365915" description="ATP synthase subunit c">
    <location>
        <begin position="1"/>
        <end position="82"/>
    </location>
</feature>
<feature type="transmembrane region" description="Helical" evidence="1">
    <location>
        <begin position="7"/>
        <end position="27"/>
    </location>
</feature>
<feature type="transmembrane region" description="Helical" evidence="1">
    <location>
        <begin position="57"/>
        <end position="77"/>
    </location>
</feature>
<feature type="site" description="Reversibly protonated during proton transport" evidence="1">
    <location>
        <position position="61"/>
    </location>
</feature>
<protein>
    <recommendedName>
        <fullName evidence="1">ATP synthase subunit c</fullName>
    </recommendedName>
    <alternativeName>
        <fullName evidence="1">ATP synthase F(0) sector subunit c</fullName>
    </alternativeName>
    <alternativeName>
        <fullName evidence="1">F-type ATPase subunit c</fullName>
        <shortName evidence="1">F-ATPase subunit c</shortName>
    </alternativeName>
    <alternativeName>
        <fullName evidence="1">Lipid-binding protein</fullName>
    </alternativeName>
</protein>
<organism>
    <name type="scientific">Prochlorococcus marinus (strain MIT 9303)</name>
    <dbReference type="NCBI Taxonomy" id="59922"/>
    <lineage>
        <taxon>Bacteria</taxon>
        <taxon>Bacillati</taxon>
        <taxon>Cyanobacteriota</taxon>
        <taxon>Cyanophyceae</taxon>
        <taxon>Synechococcales</taxon>
        <taxon>Prochlorococcaceae</taxon>
        <taxon>Prochlorococcus</taxon>
    </lineage>
</organism>